<organism>
    <name type="scientific">Vibrio vulnificus (strain YJ016)</name>
    <dbReference type="NCBI Taxonomy" id="196600"/>
    <lineage>
        <taxon>Bacteria</taxon>
        <taxon>Pseudomonadati</taxon>
        <taxon>Pseudomonadota</taxon>
        <taxon>Gammaproteobacteria</taxon>
        <taxon>Vibrionales</taxon>
        <taxon>Vibrionaceae</taxon>
        <taxon>Vibrio</taxon>
    </lineage>
</organism>
<dbReference type="EC" id="4.1.1.19" evidence="1"/>
<dbReference type="EMBL" id="BA000037">
    <property type="protein sequence ID" value="BAC94750.1"/>
    <property type="molecule type" value="Genomic_DNA"/>
</dbReference>
<dbReference type="PDB" id="3N2O">
    <property type="method" value="X-ray"/>
    <property type="resolution" value="2.30 A"/>
    <property type="chains" value="A/B/C/D=1-640"/>
</dbReference>
<dbReference type="PDBsum" id="3N2O"/>
<dbReference type="SMR" id="Q7MK24"/>
<dbReference type="STRING" id="672.VV93_v1c17470"/>
<dbReference type="KEGG" id="vvy:VV1986"/>
<dbReference type="eggNOG" id="COG1166">
    <property type="taxonomic scope" value="Bacteria"/>
</dbReference>
<dbReference type="HOGENOM" id="CLU_027243_1_0_6"/>
<dbReference type="BRENDA" id="4.1.1.19">
    <property type="organism ID" value="7786"/>
</dbReference>
<dbReference type="EvolutionaryTrace" id="Q7MK24"/>
<dbReference type="Proteomes" id="UP000002675">
    <property type="component" value="Chromosome I"/>
</dbReference>
<dbReference type="GO" id="GO:0008792">
    <property type="term" value="F:arginine decarboxylase activity"/>
    <property type="evidence" value="ECO:0007669"/>
    <property type="project" value="UniProtKB-UniRule"/>
</dbReference>
<dbReference type="GO" id="GO:0046872">
    <property type="term" value="F:metal ion binding"/>
    <property type="evidence" value="ECO:0007669"/>
    <property type="project" value="UniProtKB-KW"/>
</dbReference>
<dbReference type="GO" id="GO:0006527">
    <property type="term" value="P:arginine catabolic process"/>
    <property type="evidence" value="ECO:0007669"/>
    <property type="project" value="InterPro"/>
</dbReference>
<dbReference type="GO" id="GO:0033388">
    <property type="term" value="P:putrescine biosynthetic process from arginine"/>
    <property type="evidence" value="ECO:0007669"/>
    <property type="project" value="TreeGrafter"/>
</dbReference>
<dbReference type="GO" id="GO:0008295">
    <property type="term" value="P:spermidine biosynthetic process"/>
    <property type="evidence" value="ECO:0007669"/>
    <property type="project" value="UniProtKB-UniRule"/>
</dbReference>
<dbReference type="CDD" id="cd06830">
    <property type="entry name" value="PLPDE_III_ADC"/>
    <property type="match status" value="1"/>
</dbReference>
<dbReference type="FunFam" id="1.10.287.3440:FF:000001">
    <property type="entry name" value="Biosynthetic arginine decarboxylase"/>
    <property type="match status" value="1"/>
</dbReference>
<dbReference type="FunFam" id="2.40.37.10:FF:000001">
    <property type="entry name" value="Biosynthetic arginine decarboxylase"/>
    <property type="match status" value="1"/>
</dbReference>
<dbReference type="FunFam" id="3.20.20.10:FF:000001">
    <property type="entry name" value="Biosynthetic arginine decarboxylase"/>
    <property type="match status" value="1"/>
</dbReference>
<dbReference type="Gene3D" id="1.10.287.3440">
    <property type="match status" value="1"/>
</dbReference>
<dbReference type="Gene3D" id="1.20.58.930">
    <property type="match status" value="1"/>
</dbReference>
<dbReference type="Gene3D" id="3.20.20.10">
    <property type="entry name" value="Alanine racemase"/>
    <property type="match status" value="1"/>
</dbReference>
<dbReference type="Gene3D" id="2.40.37.10">
    <property type="entry name" value="Lyase, Ornithine Decarboxylase, Chain A, domain 1"/>
    <property type="match status" value="1"/>
</dbReference>
<dbReference type="HAMAP" id="MF_01417">
    <property type="entry name" value="SpeA"/>
    <property type="match status" value="1"/>
</dbReference>
<dbReference type="InterPro" id="IPR009006">
    <property type="entry name" value="Ala_racemase/Decarboxylase_C"/>
</dbReference>
<dbReference type="InterPro" id="IPR040634">
    <property type="entry name" value="Arg_decarb_HB"/>
</dbReference>
<dbReference type="InterPro" id="IPR041128">
    <property type="entry name" value="Arg_decarbox_C"/>
</dbReference>
<dbReference type="InterPro" id="IPR002985">
    <property type="entry name" value="Arg_decrbxlase"/>
</dbReference>
<dbReference type="InterPro" id="IPR022644">
    <property type="entry name" value="De-COase2_N"/>
</dbReference>
<dbReference type="InterPro" id="IPR000183">
    <property type="entry name" value="Orn/DAP/Arg_de-COase"/>
</dbReference>
<dbReference type="InterPro" id="IPR029066">
    <property type="entry name" value="PLP-binding_barrel"/>
</dbReference>
<dbReference type="NCBIfam" id="NF003763">
    <property type="entry name" value="PRK05354.1"/>
    <property type="match status" value="1"/>
</dbReference>
<dbReference type="NCBIfam" id="TIGR01273">
    <property type="entry name" value="speA"/>
    <property type="match status" value="1"/>
</dbReference>
<dbReference type="PANTHER" id="PTHR43295">
    <property type="entry name" value="ARGININE DECARBOXYLASE"/>
    <property type="match status" value="1"/>
</dbReference>
<dbReference type="PANTHER" id="PTHR43295:SF9">
    <property type="entry name" value="BIOSYNTHETIC ARGININE DECARBOXYLASE"/>
    <property type="match status" value="1"/>
</dbReference>
<dbReference type="Pfam" id="PF17810">
    <property type="entry name" value="Arg_decarb_HB"/>
    <property type="match status" value="1"/>
</dbReference>
<dbReference type="Pfam" id="PF17944">
    <property type="entry name" value="Arg_decarbox_C"/>
    <property type="match status" value="1"/>
</dbReference>
<dbReference type="Pfam" id="PF02784">
    <property type="entry name" value="Orn_Arg_deC_N"/>
    <property type="match status" value="1"/>
</dbReference>
<dbReference type="PIRSF" id="PIRSF001336">
    <property type="entry name" value="Arg_decrbxlase"/>
    <property type="match status" value="1"/>
</dbReference>
<dbReference type="PRINTS" id="PR01180">
    <property type="entry name" value="ARGDCRBXLASE"/>
</dbReference>
<dbReference type="PRINTS" id="PR01179">
    <property type="entry name" value="ODADCRBXLASE"/>
</dbReference>
<dbReference type="SUPFAM" id="SSF51419">
    <property type="entry name" value="PLP-binding barrel"/>
    <property type="match status" value="1"/>
</dbReference>
<feature type="chain" id="PRO_0000149986" description="Biosynthetic arginine decarboxylase">
    <location>
        <begin position="1"/>
        <end position="640"/>
    </location>
</feature>
<feature type="binding site" evidence="1">
    <location>
        <begin position="290"/>
        <end position="300"/>
    </location>
    <ligand>
        <name>substrate</name>
    </ligand>
</feature>
<feature type="modified residue" description="N6-(pyridoxal phosphate)lysine" evidence="1">
    <location>
        <position position="105"/>
    </location>
</feature>
<feature type="helix" evidence="2">
    <location>
        <begin position="11"/>
        <end position="18"/>
    </location>
</feature>
<feature type="helix" evidence="2">
    <location>
        <begin position="21"/>
        <end position="24"/>
    </location>
</feature>
<feature type="strand" evidence="2">
    <location>
        <begin position="27"/>
        <end position="30"/>
    </location>
</feature>
<feature type="strand" evidence="2">
    <location>
        <begin position="36"/>
        <end position="38"/>
    </location>
</feature>
<feature type="helix" evidence="2">
    <location>
        <begin position="50"/>
        <end position="59"/>
    </location>
</feature>
<feature type="strand" evidence="2">
    <location>
        <begin position="64"/>
        <end position="69"/>
    </location>
</feature>
<feature type="helix" evidence="2">
    <location>
        <begin position="71"/>
        <end position="92"/>
    </location>
</feature>
<feature type="strand" evidence="2">
    <location>
        <begin position="98"/>
        <end position="100"/>
    </location>
</feature>
<feature type="helix" evidence="2">
    <location>
        <begin position="104"/>
        <end position="106"/>
    </location>
</feature>
<feature type="helix" evidence="2">
    <location>
        <begin position="110"/>
        <end position="122"/>
    </location>
</feature>
<feature type="strand" evidence="2">
    <location>
        <begin position="129"/>
        <end position="132"/>
    </location>
</feature>
<feature type="helix" evidence="2">
    <location>
        <begin position="135"/>
        <end position="144"/>
    </location>
</feature>
<feature type="strand" evidence="2">
    <location>
        <begin position="146"/>
        <end position="148"/>
    </location>
</feature>
<feature type="strand" evidence="2">
    <location>
        <begin position="151"/>
        <end position="154"/>
    </location>
</feature>
<feature type="helix" evidence="2">
    <location>
        <begin position="160"/>
        <end position="171"/>
    </location>
</feature>
<feature type="strand" evidence="2">
    <location>
        <begin position="175"/>
        <end position="180"/>
    </location>
</feature>
<feature type="helix" evidence="2">
    <location>
        <begin position="185"/>
        <end position="196"/>
    </location>
</feature>
<feature type="strand" evidence="2">
    <location>
        <begin position="201"/>
        <end position="206"/>
    </location>
</feature>
<feature type="turn" evidence="2">
    <location>
        <begin position="213"/>
        <end position="216"/>
    </location>
</feature>
<feature type="strand" evidence="2">
    <location>
        <begin position="218"/>
        <end position="221"/>
    </location>
</feature>
<feature type="helix" evidence="2">
    <location>
        <begin position="230"/>
        <end position="242"/>
    </location>
</feature>
<feature type="helix" evidence="2">
    <location>
        <begin position="246"/>
        <end position="248"/>
    </location>
</feature>
<feature type="strand" evidence="2">
    <location>
        <begin position="249"/>
        <end position="253"/>
    </location>
</feature>
<feature type="strand" evidence="2">
    <location>
        <begin position="258"/>
        <end position="260"/>
    </location>
</feature>
<feature type="helix" evidence="2">
    <location>
        <begin position="263"/>
        <end position="282"/>
    </location>
</feature>
<feature type="strand" evidence="2">
    <location>
        <begin position="289"/>
        <end position="291"/>
    </location>
</feature>
<feature type="helix" evidence="2">
    <location>
        <begin position="315"/>
        <end position="333"/>
    </location>
</feature>
<feature type="strand" evidence="2">
    <location>
        <begin position="339"/>
        <end position="342"/>
    </location>
</feature>
<feature type="helix" evidence="2">
    <location>
        <begin position="345"/>
        <end position="349"/>
    </location>
</feature>
<feature type="helix" evidence="2">
    <location>
        <begin position="350"/>
        <end position="352"/>
    </location>
</feature>
<feature type="strand" evidence="2">
    <location>
        <begin position="353"/>
        <end position="363"/>
    </location>
</feature>
<feature type="helix" evidence="2">
    <location>
        <begin position="379"/>
        <end position="389"/>
    </location>
</feature>
<feature type="helix" evidence="2">
    <location>
        <begin position="397"/>
        <end position="419"/>
    </location>
</feature>
<feature type="helix" evidence="2">
    <location>
        <begin position="425"/>
        <end position="445"/>
    </location>
</feature>
<feature type="helix" evidence="2">
    <location>
        <begin position="453"/>
        <end position="463"/>
    </location>
</feature>
<feature type="strand" evidence="2">
    <location>
        <begin position="466"/>
        <end position="472"/>
    </location>
</feature>
<feature type="helix" evidence="2">
    <location>
        <begin position="474"/>
        <end position="477"/>
    </location>
</feature>
<feature type="helix" evidence="2">
    <location>
        <begin position="479"/>
        <end position="484"/>
    </location>
</feature>
<feature type="strand" evidence="2">
    <location>
        <begin position="490"/>
        <end position="494"/>
    </location>
</feature>
<feature type="helix" evidence="2">
    <location>
        <begin position="496"/>
        <end position="498"/>
    </location>
</feature>
<feature type="strand" evidence="2">
    <location>
        <begin position="501"/>
        <end position="511"/>
    </location>
</feature>
<feature type="strand" evidence="2">
    <location>
        <begin position="520"/>
        <end position="522"/>
    </location>
</feature>
<feature type="strand" evidence="2">
    <location>
        <begin position="525"/>
        <end position="532"/>
    </location>
</feature>
<feature type="strand" evidence="2">
    <location>
        <begin position="542"/>
        <end position="547"/>
    </location>
</feature>
<feature type="helix" evidence="2">
    <location>
        <begin position="552"/>
        <end position="555"/>
    </location>
</feature>
<feature type="helix" evidence="2">
    <location>
        <begin position="559"/>
        <end position="561"/>
    </location>
</feature>
<feature type="strand" evidence="2">
    <location>
        <begin position="566"/>
        <end position="572"/>
    </location>
</feature>
<feature type="strand" evidence="2">
    <location>
        <begin position="578"/>
        <end position="584"/>
    </location>
</feature>
<feature type="helix" evidence="2">
    <location>
        <begin position="589"/>
        <end position="595"/>
    </location>
</feature>
<feature type="helix" evidence="2">
    <location>
        <begin position="600"/>
        <end position="614"/>
    </location>
</feature>
<feature type="helix" evidence="2">
    <location>
        <begin position="617"/>
        <end position="632"/>
    </location>
</feature>
<feature type="strand" evidence="2">
    <location>
        <begin position="633"/>
        <end position="636"/>
    </location>
</feature>
<reference key="1">
    <citation type="journal article" date="2003" name="Genome Res.">
        <title>Comparative genome analysis of Vibrio vulnificus, a marine pathogen.</title>
        <authorList>
            <person name="Chen C.-Y."/>
            <person name="Wu K.-M."/>
            <person name="Chang Y.-C."/>
            <person name="Chang C.-H."/>
            <person name="Tsai H.-C."/>
            <person name="Liao T.-L."/>
            <person name="Liu Y.-M."/>
            <person name="Chen H.-J."/>
            <person name="Shen A.B.-T."/>
            <person name="Li J.-C."/>
            <person name="Su T.-L."/>
            <person name="Shao C.-P."/>
            <person name="Lee C.-T."/>
            <person name="Hor L.-I."/>
            <person name="Tsai S.-F."/>
        </authorList>
    </citation>
    <scope>NUCLEOTIDE SEQUENCE [LARGE SCALE GENOMIC DNA]</scope>
    <source>
        <strain>YJ016</strain>
    </source>
</reference>
<name>SPEA_VIBVY</name>
<comment type="function">
    <text evidence="1">Catalyzes the biosynthesis of agmatine from arginine.</text>
</comment>
<comment type="catalytic activity">
    <reaction evidence="1">
        <text>L-arginine + H(+) = agmatine + CO2</text>
        <dbReference type="Rhea" id="RHEA:17641"/>
        <dbReference type="ChEBI" id="CHEBI:15378"/>
        <dbReference type="ChEBI" id="CHEBI:16526"/>
        <dbReference type="ChEBI" id="CHEBI:32682"/>
        <dbReference type="ChEBI" id="CHEBI:58145"/>
        <dbReference type="EC" id="4.1.1.19"/>
    </reaction>
</comment>
<comment type="cofactor">
    <cofactor evidence="1">
        <name>Mg(2+)</name>
        <dbReference type="ChEBI" id="CHEBI:18420"/>
    </cofactor>
</comment>
<comment type="cofactor">
    <cofactor evidence="1">
        <name>pyridoxal 5'-phosphate</name>
        <dbReference type="ChEBI" id="CHEBI:597326"/>
    </cofactor>
</comment>
<comment type="similarity">
    <text evidence="1">Belongs to the Orn/Lys/Arg decarboxylase class-II family. SpeA subfamily.</text>
</comment>
<proteinExistence type="evidence at protein level"/>
<sequence length="640" mass="72493">MRLDVEQTSKLDRVRADYNVHYWSQGFYGIDDQGEMYVSPRSDNAHQIQLSKIVKQLEERQLNVPVLVRFPQILHQRVHSICDAFNQAIEEYQYPNKYLLVYPIKVNQQREVVDEILASQAQLETKQLGLEAGSKPELLAVLAMAQHASSVIVCNGYKDREYIRLALIGEKLGHKVFIVLEKMSELDLVLREAKSLGVTPRLGIRIRLASQGAGKWQASGGEKSKFGLSASQVLNVISRLKKENQLDTLQLVHFHLGSQMANIRDVRNGVNESARFYCELRTLGANITYFDVGGGLAIDYDGTRSQSSNSMNYGLVEYARNIVNTVGDVCKDYKQPMPVIISESGRSLTAHHAVLISNVIGTETYKPETVTEPEEDFPLLLNNMWRSWLNLHNGTDARALIEIYNDTQSDLAEVHSQFATGVLTLEHRAWAEQTSLRIYYELNRLMSTKNRFHRPILDELSERLADKFFVNFSLFQSLPDSWGIDQVFPVLPLSGLQNAADRRAVMLDITCDSDGAIDAYVDGQGIESTLPVPAWNEDEPYLMGFFLVGAYQEILGDMHNLFGDTHSVVVNVGDQGEINIDFINEGDTVEDMMRYVHIDVDQIRKNYHSLVSQRVDQEEQQQILAELEQGLSGYTYLEDF</sequence>
<gene>
    <name evidence="1" type="primary">speA</name>
    <name type="ordered locus">VV1986</name>
</gene>
<evidence type="ECO:0000255" key="1">
    <source>
        <dbReference type="HAMAP-Rule" id="MF_01417"/>
    </source>
</evidence>
<evidence type="ECO:0007829" key="2">
    <source>
        <dbReference type="PDB" id="3N2O"/>
    </source>
</evidence>
<protein>
    <recommendedName>
        <fullName evidence="1">Biosynthetic arginine decarboxylase</fullName>
        <shortName evidence="1">ADC</shortName>
        <ecNumber evidence="1">4.1.1.19</ecNumber>
    </recommendedName>
</protein>
<keyword id="KW-0002">3D-structure</keyword>
<keyword id="KW-0210">Decarboxylase</keyword>
<keyword id="KW-0456">Lyase</keyword>
<keyword id="KW-0460">Magnesium</keyword>
<keyword id="KW-0479">Metal-binding</keyword>
<keyword id="KW-0620">Polyamine biosynthesis</keyword>
<keyword id="KW-0663">Pyridoxal phosphate</keyword>
<keyword id="KW-0745">Spermidine biosynthesis</keyword>
<accession>Q7MK24</accession>